<evidence type="ECO:0000250" key="1">
    <source>
        <dbReference type="UniProtKB" id="A0A0H2URK1"/>
    </source>
</evidence>
<evidence type="ECO:0000255" key="2">
    <source>
        <dbReference type="PROSITE-ProRule" id="PRU00477"/>
    </source>
</evidence>
<evidence type="ECO:0000256" key="3">
    <source>
        <dbReference type="SAM" id="MobiDB-lite"/>
    </source>
</evidence>
<evidence type="ECO:0000269" key="4">
    <source>
    </source>
</evidence>
<evidence type="ECO:0000269" key="5">
    <source>
    </source>
</evidence>
<evidence type="ECO:0000269" key="6">
    <source>
    </source>
</evidence>
<evidence type="ECO:0000269" key="7">
    <source>
    </source>
</evidence>
<evidence type="ECO:0000269" key="8">
    <source>
    </source>
</evidence>
<evidence type="ECO:0000269" key="9">
    <source>
    </source>
</evidence>
<evidence type="ECO:0000269" key="10">
    <source>
    </source>
</evidence>
<evidence type="ECO:0000303" key="11">
    <source>
    </source>
</evidence>
<evidence type="ECO:0000303" key="12">
    <source>
    </source>
</evidence>
<evidence type="ECO:0000303" key="13">
    <source>
    </source>
</evidence>
<evidence type="ECO:0000305" key="14"/>
<evidence type="ECO:0000305" key="15">
    <source>
    </source>
</evidence>
<evidence type="ECO:0000305" key="16">
    <source>
    </source>
</evidence>
<evidence type="ECO:0000305" key="17">
    <source>
    </source>
</evidence>
<evidence type="ECO:0007744" key="18">
    <source>
        <dbReference type="PDB" id="4M00"/>
    </source>
</evidence>
<evidence type="ECO:0007744" key="19">
    <source>
        <dbReference type="PDB" id="4M01"/>
    </source>
</evidence>
<evidence type="ECO:0007744" key="20">
    <source>
        <dbReference type="PDB" id="4M02"/>
    </source>
</evidence>
<evidence type="ECO:0007744" key="21">
    <source>
        <dbReference type="PDB" id="4M03"/>
    </source>
</evidence>
<evidence type="ECO:0007829" key="22">
    <source>
        <dbReference type="PDB" id="4M00"/>
    </source>
</evidence>
<evidence type="ECO:0007829" key="23">
    <source>
        <dbReference type="PDB" id="4M01"/>
    </source>
</evidence>
<evidence type="ECO:0007829" key="24">
    <source>
        <dbReference type="PDB" id="4M02"/>
    </source>
</evidence>
<evidence type="ECO:0007829" key="25">
    <source>
        <dbReference type="PDB" id="4M03"/>
    </source>
</evidence>
<sequence>MSKRQKAFHDSLANEKTRVRLYKSGKNWVKSGIKEIEMFKIMGLPFISHSLVSQDNQSISKKMTGYGLKTTAVIGGAFTVNMLHDQQAFAASDAPLTSELNTQSETVGNQNSTTIEASTSTADSTSVTKNSSSVQTSNSDTVSSEKSEKVTSTTNSTSNQQEKLTSTSESTSSKNTTSSSDTKSVASTSSTEQPINTSTNQSTASNNTSQSTTPSSVNLNKTSTTSTSTAPVKLRTFSRLAMSTFASAATTTAVTANTITVNKDNLKQYMTTSGNATYDQSTGIVTLTQDAYSQKGAITLGTRIDSNKSFHFSGKVNLGNKYEGHGNGGDGIGFAFSPGVLGETGLNGAAVGIGGLSNAFGFKLDTYHNTSKPNSAAKANADPSNVAGGGAFGAFVTTDSYGVATTYTSSSTADNAAKLNVQPTNNTFQDFDINYNGDTKVMTVKYAGQTWTRNISDWIAKSGTTNFSLSMTASTGGATNLQQVQFGTFEYTESAVTQVRYVDVTTGKDIIPPKTYSGNVDQVVTIDNQQSALTAKGYNYTSVDSSYASTYNDTNKTVKMTNAGQSVTYYFTDVKAPTVTVGNQTIEVGKTMNPIVLTTTDNGTGTVTNTVTGLPSGLSYDSATNSIIGTPTKIGQSTVTVVSTDQANNKSTTTFTINVVDTTAPTVTPIGDQSSEVYSPISPIKIATQDNSGNAVTNTVTGLPSGLTFDSTNNTISGTPTNIGTSTISIVSTDASGNKTTTTFKYEVTRNSMSDSVSTSGSTQQSQSVSTSKADSQSASTSTSGSIVVSTSASTSKSTSVSLSDSVSASKSLSTSESNSVSSSTSTSLVNSQSVSSSMSDSASKSTSLSDSISNSSSTEKSESLSTSTSDSLRTSTSLSDSLSMSTSGSLSKSQSLSTSISGSSSTSASLSDSTSNAISTSTSLSESASTSDSISISNSIANSQSASTSKSDSQSTSISLSTSDSKSMSTSESLSDSTSTSGSVSGSLSIAASQSVSTSTSDSMSTSEIVSDSISTSGSLSASDSKSMSVSSSMSTSQSGSTSESLSDSQSTSDSDSKSLSQSTSQSGSTSTSTSTSASVRTSESQSTSGSMSASQSDSMSISTSFSDSTSDSKSASTASSESISQSASTSTSGSVSTSTSLSTSNSERTSTSMSDSTSLSTSESDSISESTSTSDSISEAISASESTFISLSESNSTSDSESQSASAFLSESLSESTSESTSESVSSSTSESTSLSDSTSESGSTSTSLSNSTSGSTSISTSTSISESTSTFKSESVSTSLSMSTSTSLSDSTSLSTSLSDSTSDSKSDSLSTSMSTSDSISTSKSDSISTSTSLSGSTSESESDSTSSSESKSDSTSMSISMSQSTSGSTSTSTSTSLSDSTSTSLSLSASMNQSGVDSNSASQSASNSTSTSTSESDSQSTSSYTSQSTSQSESTSTSTSLSDSTSISKSTSQSGSVSTSASLSGSESESDSQSISTSASESTSESASTSLSDSTSTSNSGSASTSTSLNNSASASESDLSSTSLSDSTSASMQSSESDSQSTSASLSDSLSTSTSNRMSTIASLSTSVSTSESGSTSESTSESDSTSTSLSDSQSTSRSTSASGSASTSTSTSDSRSTSASTSTSMRTSTSDSQSMSLSTSTSTSMSDSTSLSDSVSDSTSDSTSASTSGSMSVSISLSDSTSTSTSASEVMSASISDSQSMSESVNDSESVSESNSESDSKSMSGSTSVSDSGSLSVSTSLRKSESVSESSSLSCSQSMSDSVSTSDSSSLSVSTSLRSSESVSESDSLSDSKSTSGSTSTSTSGSLSTSTSLSGSESVSESTSLSDSISMSDSTSTSDSDSLSGSISLSGSTSLSTSDSLSDSKSLSSSQSMSGSESTSTSVSDSQSSSTSNSQFDSMSISASESDSMSTSDSSSISGSNSTSTSLSTSDSMSGSVSVSTSTSLSDSISGSTSVSDSSSTSTSTSLSDSMSQSQSTSTSASGSLSTSISTSMSMSASTSSSQSTSVSTSLSTSDSISDSTSISISGSQSTVESESTSDSTSISDSESLSTSDSDSTSTSTSDSTSGSTSTSISESLSTSGSGSTSVSDSTSMSESNSSSVSMSQDKSDSTSISDSESVSTSTSTSLSTSDSTSTSESLSTSMSGSQSISDSTSTSMSGSTSTSESNSMHPSDSMSMHHTHSTSTSRLSSEATTSTSESQSTLSATSEVTKHNGTPAQSEKRLPDTGDSIKQNGLLGGVMTLLVGLGLMKRKKKKDENDQDDSQA</sequence>
<proteinExistence type="evidence at protein level"/>
<gene>
    <name evidence="12" type="primary">sraP</name>
    <name evidence="11" type="synonym">sasA</name>
    <name type="ordered locus">SAOUHSC_02990</name>
</gene>
<comment type="function">
    <text evidence="5 9 10">Mediates binding to human platelets, possibly through a receptor-ligand interaction. Probably associated with virulence in endovascular infection (PubMed:15784571). Plays a positive role in biofilm formation, possibly by self-association via the non-repeat region (NRR or binding region, BR) (PubMed:20714350). Binds to and plays a role in human lung epithelial cell invasion via the L-lectin module of its NRR domain; N-acetylneuraminic acid (Neu5Ac) inhibits binding. Treatment of host cells with neuraminidase decreases adherence of S.aureus cells, suggesting SraP recognizes a host terminal Neu5Ac moiety as a receptor (PubMed:24901708).</text>
</comment>
<comment type="subcellular location">
    <subcellularLocation>
        <location evidence="2 4 5 6 7 15">Secreted</location>
        <location evidence="2 4 5 6 7 15">Cell wall</location>
        <topology evidence="2 4 5 6 15">Peptidoglycan-anchor</topology>
    </subcellularLocation>
    <text evidence="6 7 15">Primarily exported by the accessory SecA2/SecY2 protein translocation apparatus (PubMed:18621893). Distributed in a discrete, punctate pattern with up to 3 loci per cell over the surface (PubMed:18800056). Anchored to the cell wall by sortase A (Probable).</text>
</comment>
<comment type="induction">
    <text evidence="8">Most highly expressed in the transient phase between exponential and stationary growth. A further 2-fold induction occurs in secG or secG/secY2 disruption mutants.</text>
</comment>
<comment type="domain">
    <text evidence="9 10 13">The non-repeat region (NRR, also called binding region, BR) binds to whole cell lysates of wild-type but not bacteria deleted of this gene; it also recognizes whole cell lysates of S.gordonii strain M99 probably via GspB, but not lysates of S.pneumoniae TIGR4 (PubMed:20714350). The NRR is acidic, with a predicted pI of 5.69 in strain ISP479C (PubMed:19202081). The NRR has 4 discrete modules that align end-to-end to form a slightly bent rod. The first is an L-lectin module which binds 1 Ca(2+) ion and N-acetylneuraminic acid (Neu5Ac), and mediates adhesion to human lung epithelial cells (A549 cell line), probably via sialylated receptors. Neu5Ac inhibits binding of A549 cells by the NRR domain. The second beta-grasp module adopts a ubiquitin-like beta-grasp fold which resembles the Ig-binding superfamily, while the 2 other modules resemble cadherins; the cadherin-like modules each bind a Ca(2+). Ca(2+) binding rigidifies the cadherin-like modules and extends the molecule (PubMed:24901708).</text>
</comment>
<comment type="PTM">
    <text evidence="4">Proteolytically cleaved by a metalloprotease.</text>
</comment>
<comment type="PTM">
    <text evidence="1 5">Glycosylated (PubMed:15784571). It is probable that most of the Ser residues in SSR1 and SSR2 are O-GlcNAcylated. Sequential glycosylation by sugar transferases are able to generate complex sugar polymorphisms (By similarity).</text>
</comment>
<comment type="disruption phenotype">
    <text evidence="9 10">Decrease in early biofilm formation (PubMed:20714350). About 40% reduction in adhesion to human lung epithelial cells and about 50% reduction in host cell invasion. No significant reduction in biofilm formation or bacterial aggregation (PubMed:24901708).</text>
</comment>
<comment type="similarity">
    <text evidence="14">Belongs to the serine-rich repeat protein (SRRP) family.</text>
</comment>
<feature type="signal peptide" evidence="16">
    <location>
        <begin position="1"/>
        <end position="89"/>
    </location>
</feature>
<feature type="chain" id="PRO_0000273932" description="Serine-rich adhesin for platelets">
    <location>
        <begin position="90"/>
        <end position="2232"/>
    </location>
</feature>
<feature type="propeptide" id="PRO_0000273933" description="Removed by sortase" evidence="2 15">
    <location>
        <begin position="2233"/>
        <end position="2271"/>
    </location>
</feature>
<feature type="region of interest" description="Serine-rich repeat region 1, SRR1" evidence="12 13">
    <location>
        <begin position="90"/>
        <end position="230"/>
    </location>
</feature>
<feature type="region of interest" description="Disordered" evidence="3">
    <location>
        <begin position="100"/>
        <end position="229"/>
    </location>
</feature>
<feature type="region of interest" description="Non-repeat region (NRR)" evidence="12 13">
    <location>
        <begin position="231"/>
        <end position="751"/>
    </location>
</feature>
<feature type="region of interest" description="L-lectin module" evidence="17">
    <location>
        <begin position="245"/>
        <end position="491"/>
    </location>
</feature>
<feature type="region of interest" description="beta-grasp module" evidence="17">
    <location>
        <begin position="492"/>
        <end position="571"/>
    </location>
</feature>
<feature type="region of interest" description="Cadherin-like module-1" evidence="17">
    <location>
        <begin position="572"/>
        <end position="659"/>
    </location>
</feature>
<feature type="region of interest" description="Cadherin-like module-2" evidence="17">
    <location>
        <begin position="660"/>
        <end position="751"/>
    </location>
</feature>
<feature type="region of interest" description="Disordered" evidence="3">
    <location>
        <begin position="751"/>
        <end position="791"/>
    </location>
</feature>
<feature type="region of interest" description="Serine-rich repeat region 2, SRR2" evidence="12 13">
    <location>
        <begin position="752"/>
        <end position="2232"/>
    </location>
</feature>
<feature type="region of interest" description="Disordered" evidence="3">
    <location>
        <begin position="806"/>
        <end position="2242"/>
    </location>
</feature>
<feature type="short sequence motif" description="LPXTG sorting signal" evidence="2">
    <location>
        <begin position="2229"/>
        <end position="2233"/>
    </location>
</feature>
<feature type="compositionally biased region" description="Polar residues" evidence="3">
    <location>
        <begin position="100"/>
        <end position="111"/>
    </location>
</feature>
<feature type="compositionally biased region" description="Low complexity" evidence="3">
    <location>
        <begin position="112"/>
        <end position="128"/>
    </location>
</feature>
<feature type="compositionally biased region" description="Polar residues" evidence="3">
    <location>
        <begin position="129"/>
        <end position="140"/>
    </location>
</feature>
<feature type="compositionally biased region" description="Low complexity" evidence="3">
    <location>
        <begin position="150"/>
        <end position="229"/>
    </location>
</feature>
<feature type="compositionally biased region" description="Low complexity" evidence="3">
    <location>
        <begin position="752"/>
        <end position="791"/>
    </location>
</feature>
<feature type="compositionally biased region" description="Low complexity" evidence="3">
    <location>
        <begin position="806"/>
        <end position="1392"/>
    </location>
</feature>
<feature type="compositionally biased region" description="Low complexity" evidence="3">
    <location>
        <begin position="1402"/>
        <end position="2214"/>
    </location>
</feature>
<feature type="binding site" evidence="10 18 19">
    <location>
        <position position="365"/>
    </location>
    <ligand>
        <name>Ca(2+)</name>
        <dbReference type="ChEBI" id="CHEBI:29108"/>
        <label>1</label>
    </ligand>
</feature>
<feature type="binding site" evidence="10 18 19">
    <location>
        <position position="367"/>
    </location>
    <ligand>
        <name>Ca(2+)</name>
        <dbReference type="ChEBI" id="CHEBI:29108"/>
        <label>1</label>
    </ligand>
</feature>
<feature type="binding site" evidence="10 18 19">
    <location>
        <position position="369"/>
    </location>
    <ligand>
        <name>Ca(2+)</name>
        <dbReference type="ChEBI" id="CHEBI:29108"/>
        <label>1</label>
    </ligand>
</feature>
<feature type="binding site" evidence="10 18 19">
    <location>
        <position position="382"/>
    </location>
    <ligand>
        <name>Ca(2+)</name>
        <dbReference type="ChEBI" id="CHEBI:29108"/>
        <label>1</label>
    </ligand>
</feature>
<feature type="binding site" evidence="10 18 20">
    <location>
        <position position="573"/>
    </location>
    <ligand>
        <name>Ca(2+)</name>
        <dbReference type="ChEBI" id="CHEBI:29108"/>
        <label>2</label>
    </ligand>
</feature>
<feature type="binding site" evidence="10 18 20">
    <location>
        <position position="575"/>
    </location>
    <ligand>
        <name>Ca(2+)</name>
        <dbReference type="ChEBI" id="CHEBI:29108"/>
        <label>2</label>
    </ligand>
</feature>
<feature type="binding site" evidence="10 18 20">
    <location>
        <position position="601"/>
    </location>
    <ligand>
        <name>Ca(2+)</name>
        <dbReference type="ChEBI" id="CHEBI:29108"/>
        <label>2</label>
    </ligand>
</feature>
<feature type="binding site" evidence="10 18 20">
    <location>
        <position position="602"/>
    </location>
    <ligand>
        <name>Ca(2+)</name>
        <dbReference type="ChEBI" id="CHEBI:29108"/>
        <label>2</label>
    </ligand>
</feature>
<feature type="binding site" evidence="10 18 20">
    <location>
        <position position="645"/>
    </location>
    <ligand>
        <name>Ca(2+)</name>
        <dbReference type="ChEBI" id="CHEBI:29108"/>
        <label>2</label>
    </ligand>
</feature>
<feature type="binding site" evidence="10 18 21">
    <location>
        <position position="661"/>
    </location>
    <ligand>
        <name>Ca(2+)</name>
        <dbReference type="ChEBI" id="CHEBI:29108"/>
        <label>3</label>
    </ligand>
</feature>
<feature type="binding site" evidence="10 18 21">
    <location>
        <position position="663"/>
    </location>
    <ligand>
        <name>Ca(2+)</name>
        <dbReference type="ChEBI" id="CHEBI:29108"/>
        <label>3</label>
    </ligand>
</feature>
<feature type="binding site" evidence="10 18 21">
    <location>
        <position position="690"/>
    </location>
    <ligand>
        <name>Ca(2+)</name>
        <dbReference type="ChEBI" id="CHEBI:29108"/>
        <label>3</label>
    </ligand>
</feature>
<feature type="binding site" evidence="10 18 21">
    <location>
        <position position="691"/>
    </location>
    <ligand>
        <name>Ca(2+)</name>
        <dbReference type="ChEBI" id="CHEBI:29108"/>
        <label>3</label>
    </ligand>
</feature>
<feature type="binding site" evidence="10 18 21">
    <location>
        <position position="734"/>
    </location>
    <ligand>
        <name>Ca(2+)</name>
        <dbReference type="ChEBI" id="CHEBI:29108"/>
        <label>3</label>
    </ligand>
</feature>
<feature type="modified residue" description="Pentaglycyl murein peptidoglycan amidated threonine" evidence="2">
    <location>
        <position position="2232"/>
    </location>
</feature>
<feature type="mutagenesis site" description="NRR region no longer binds to host cells." evidence="10">
    <original>Y</original>
    <variation>G</variation>
    <location>
        <position position="367"/>
    </location>
</feature>
<feature type="strand" evidence="22">
    <location>
        <begin position="258"/>
        <end position="261"/>
    </location>
</feature>
<feature type="turn" evidence="22">
    <location>
        <begin position="263"/>
        <end position="265"/>
    </location>
</feature>
<feature type="helix" evidence="22">
    <location>
        <begin position="266"/>
        <end position="269"/>
    </location>
</feature>
<feature type="strand" evidence="22">
    <location>
        <begin position="270"/>
        <end position="274"/>
    </location>
</feature>
<feature type="strand" evidence="22">
    <location>
        <begin position="277"/>
        <end position="279"/>
    </location>
</feature>
<feature type="turn" evidence="22">
    <location>
        <begin position="280"/>
        <end position="283"/>
    </location>
</feature>
<feature type="strand" evidence="22">
    <location>
        <begin position="284"/>
        <end position="288"/>
    </location>
</feature>
<feature type="strand" evidence="23">
    <location>
        <begin position="290"/>
        <end position="293"/>
    </location>
</feature>
<feature type="strand" evidence="22">
    <location>
        <begin position="295"/>
        <end position="305"/>
    </location>
</feature>
<feature type="strand" evidence="22">
    <location>
        <begin position="310"/>
        <end position="317"/>
    </location>
</feature>
<feature type="strand" evidence="22">
    <location>
        <begin position="325"/>
        <end position="327"/>
    </location>
</feature>
<feature type="strand" evidence="22">
    <location>
        <begin position="331"/>
        <end position="339"/>
    </location>
</feature>
<feature type="helix" evidence="22">
    <location>
        <begin position="348"/>
        <end position="350"/>
    </location>
</feature>
<feature type="turn" evidence="22">
    <location>
        <begin position="351"/>
        <end position="355"/>
    </location>
</feature>
<feature type="strand" evidence="22">
    <location>
        <begin position="360"/>
        <end position="365"/>
    </location>
</feature>
<feature type="helix" evidence="22">
    <location>
        <begin position="375"/>
        <end position="377"/>
    </location>
</feature>
<feature type="helix" evidence="22">
    <location>
        <begin position="384"/>
        <end position="386"/>
    </location>
</feature>
<feature type="strand" evidence="22">
    <location>
        <begin position="388"/>
        <end position="390"/>
    </location>
</feature>
<feature type="strand" evidence="22">
    <location>
        <begin position="392"/>
        <end position="398"/>
    </location>
</feature>
<feature type="strand" evidence="22">
    <location>
        <begin position="404"/>
        <end position="406"/>
    </location>
</feature>
<feature type="turn" evidence="22">
    <location>
        <begin position="412"/>
        <end position="414"/>
    </location>
</feature>
<feature type="strand" evidence="22">
    <location>
        <begin position="429"/>
        <end position="435"/>
    </location>
</feature>
<feature type="turn" evidence="22">
    <location>
        <begin position="437"/>
        <end position="439"/>
    </location>
</feature>
<feature type="strand" evidence="22">
    <location>
        <begin position="441"/>
        <end position="446"/>
    </location>
</feature>
<feature type="strand" evidence="22">
    <location>
        <begin position="449"/>
        <end position="454"/>
    </location>
</feature>
<feature type="helix" evidence="22">
    <location>
        <begin position="456"/>
        <end position="461"/>
    </location>
</feature>
<feature type="strand" evidence="22">
    <location>
        <begin position="465"/>
        <end position="474"/>
    </location>
</feature>
<feature type="strand" evidence="22">
    <location>
        <begin position="476"/>
        <end position="478"/>
    </location>
</feature>
<feature type="strand" evidence="24">
    <location>
        <begin position="496"/>
        <end position="503"/>
    </location>
</feature>
<feature type="turn" evidence="24">
    <location>
        <begin position="504"/>
        <end position="506"/>
    </location>
</feature>
<feature type="strand" evidence="24">
    <location>
        <begin position="509"/>
        <end position="511"/>
    </location>
</feature>
<feature type="strand" evidence="24">
    <location>
        <begin position="514"/>
        <end position="517"/>
    </location>
</feature>
<feature type="strand" evidence="24">
    <location>
        <begin position="523"/>
        <end position="525"/>
    </location>
</feature>
<feature type="helix" evidence="24">
    <location>
        <begin position="530"/>
        <end position="535"/>
    </location>
</feature>
<feature type="strand" evidence="24">
    <location>
        <begin position="538"/>
        <end position="547"/>
    </location>
</feature>
<feature type="turn" evidence="24">
    <location>
        <begin position="553"/>
        <end position="556"/>
    </location>
</feature>
<feature type="strand" evidence="24">
    <location>
        <begin position="557"/>
        <end position="559"/>
    </location>
</feature>
<feature type="strand" evidence="24">
    <location>
        <begin position="565"/>
        <end position="573"/>
    </location>
</feature>
<feature type="strand" evidence="24">
    <location>
        <begin position="578"/>
        <end position="580"/>
    </location>
</feature>
<feature type="strand" evidence="24">
    <location>
        <begin position="584"/>
        <end position="587"/>
    </location>
</feature>
<feature type="strand" evidence="24">
    <location>
        <begin position="598"/>
        <end position="600"/>
    </location>
</feature>
<feature type="strand" evidence="24">
    <location>
        <begin position="602"/>
        <end position="605"/>
    </location>
</feature>
<feature type="strand" evidence="24">
    <location>
        <begin position="607"/>
        <end position="612"/>
    </location>
</feature>
<feature type="strand" evidence="24">
    <location>
        <begin position="618"/>
        <end position="621"/>
    </location>
</feature>
<feature type="turn" evidence="24">
    <location>
        <begin position="622"/>
        <end position="625"/>
    </location>
</feature>
<feature type="strand" evidence="24">
    <location>
        <begin position="626"/>
        <end position="629"/>
    </location>
</feature>
<feature type="strand" evidence="24">
    <location>
        <begin position="635"/>
        <end position="645"/>
    </location>
</feature>
<feature type="strand" evidence="24">
    <location>
        <begin position="650"/>
        <end position="660"/>
    </location>
</feature>
<feature type="strand" evidence="22">
    <location>
        <begin position="673"/>
        <end position="676"/>
    </location>
</feature>
<feature type="strand" evidence="25">
    <location>
        <begin position="691"/>
        <end position="694"/>
    </location>
</feature>
<feature type="strand" evidence="22">
    <location>
        <begin position="697"/>
        <end position="701"/>
    </location>
</feature>
<feature type="strand" evidence="22">
    <location>
        <begin position="707"/>
        <end position="710"/>
    </location>
</feature>
<feature type="turn" evidence="22">
    <location>
        <begin position="711"/>
        <end position="714"/>
    </location>
</feature>
<feature type="strand" evidence="22">
    <location>
        <begin position="715"/>
        <end position="718"/>
    </location>
</feature>
<feature type="strand" evidence="22">
    <location>
        <begin position="724"/>
        <end position="733"/>
    </location>
</feature>
<feature type="strand" evidence="22">
    <location>
        <begin position="739"/>
        <end position="749"/>
    </location>
</feature>
<accession>Q2FUW1</accession>
<organism>
    <name type="scientific">Staphylococcus aureus (strain NCTC 8325 / PS 47)</name>
    <dbReference type="NCBI Taxonomy" id="93061"/>
    <lineage>
        <taxon>Bacteria</taxon>
        <taxon>Bacillati</taxon>
        <taxon>Bacillota</taxon>
        <taxon>Bacilli</taxon>
        <taxon>Bacillales</taxon>
        <taxon>Staphylococcaceae</taxon>
        <taxon>Staphylococcus</taxon>
    </lineage>
</organism>
<dbReference type="EMBL" id="CP000253">
    <property type="protein sequence ID" value="ABD31977.1"/>
    <property type="molecule type" value="Genomic_DNA"/>
</dbReference>
<dbReference type="RefSeq" id="WP_000044531.1">
    <property type="nucleotide sequence ID" value="NC_007795.1"/>
</dbReference>
<dbReference type="RefSeq" id="YP_501439.1">
    <property type="nucleotide sequence ID" value="NC_007795.1"/>
</dbReference>
<dbReference type="PDB" id="4M00">
    <property type="method" value="X-ray"/>
    <property type="resolution" value="2.05 A"/>
    <property type="chains" value="A=245-751"/>
</dbReference>
<dbReference type="PDB" id="4M01">
    <property type="method" value="X-ray"/>
    <property type="resolution" value="2.10 A"/>
    <property type="chains" value="A/B/C/D=245-575"/>
</dbReference>
<dbReference type="PDB" id="4M02">
    <property type="method" value="X-ray"/>
    <property type="resolution" value="1.59 A"/>
    <property type="chains" value="A=494-663"/>
</dbReference>
<dbReference type="PDB" id="4M03">
    <property type="method" value="X-ray"/>
    <property type="resolution" value="2.24 A"/>
    <property type="chains" value="A=576-751"/>
</dbReference>
<dbReference type="PDBsum" id="4M00"/>
<dbReference type="PDBsum" id="4M01"/>
<dbReference type="PDBsum" id="4M02"/>
<dbReference type="PDBsum" id="4M03"/>
<dbReference type="SMR" id="Q2FUW1"/>
<dbReference type="STRING" id="93061.SAOUHSC_02990"/>
<dbReference type="UniLectin" id="Q2FUW1"/>
<dbReference type="PaxDb" id="1280-SAXN108_2926"/>
<dbReference type="GeneID" id="3921472"/>
<dbReference type="KEGG" id="sao:SAOUHSC_02990"/>
<dbReference type="PATRIC" id="fig|93061.5.peg.2697"/>
<dbReference type="eggNOG" id="COG5492">
    <property type="taxonomic scope" value="Bacteria"/>
</dbReference>
<dbReference type="eggNOG" id="COG5604">
    <property type="taxonomic scope" value="Bacteria"/>
</dbReference>
<dbReference type="HOGENOM" id="CLU_002109_0_0_9"/>
<dbReference type="OrthoDB" id="2414608at2"/>
<dbReference type="EvolutionaryTrace" id="Q2FUW1"/>
<dbReference type="Proteomes" id="UP000008816">
    <property type="component" value="Chromosome"/>
</dbReference>
<dbReference type="GO" id="GO:0005576">
    <property type="term" value="C:extracellular region"/>
    <property type="evidence" value="ECO:0007669"/>
    <property type="project" value="UniProtKB-KW"/>
</dbReference>
<dbReference type="GO" id="GO:0016020">
    <property type="term" value="C:membrane"/>
    <property type="evidence" value="ECO:0007669"/>
    <property type="project" value="InterPro"/>
</dbReference>
<dbReference type="GO" id="GO:0005509">
    <property type="term" value="F:calcium ion binding"/>
    <property type="evidence" value="ECO:0007669"/>
    <property type="project" value="InterPro"/>
</dbReference>
<dbReference type="GO" id="GO:0007155">
    <property type="term" value="P:cell adhesion"/>
    <property type="evidence" value="ECO:0007669"/>
    <property type="project" value="UniProtKB-KW"/>
</dbReference>
<dbReference type="CDD" id="cd01951">
    <property type="entry name" value="lectin_L-type"/>
    <property type="match status" value="1"/>
</dbReference>
<dbReference type="Gene3D" id="2.60.120.200">
    <property type="match status" value="1"/>
</dbReference>
<dbReference type="Gene3D" id="3.10.20.320">
    <property type="entry name" value="Putative peptidoglycan bound protein (lpxtg motif)"/>
    <property type="match status" value="1"/>
</dbReference>
<dbReference type="InterPro" id="IPR015919">
    <property type="entry name" value="Cadherin-like_sf"/>
</dbReference>
<dbReference type="InterPro" id="IPR013320">
    <property type="entry name" value="ConA-like_dom_sf"/>
</dbReference>
<dbReference type="InterPro" id="IPR022263">
    <property type="entry name" value="KxYKxGKxW"/>
</dbReference>
<dbReference type="InterPro" id="IPR056573">
    <property type="entry name" value="Lectin_L-type_dom"/>
</dbReference>
<dbReference type="InterPro" id="IPR019931">
    <property type="entry name" value="LPXTG_anchor"/>
</dbReference>
<dbReference type="NCBIfam" id="TIGR03715">
    <property type="entry name" value="KxYKxGKxW"/>
    <property type="match status" value="1"/>
</dbReference>
<dbReference type="NCBIfam" id="TIGR01167">
    <property type="entry name" value="LPXTG_anchor"/>
    <property type="match status" value="1"/>
</dbReference>
<dbReference type="PANTHER" id="PTHR22928">
    <property type="entry name" value="TELOMERE-ASSOCIATED PROTEIN RIF1"/>
    <property type="match status" value="1"/>
</dbReference>
<dbReference type="PANTHER" id="PTHR22928:SF3">
    <property type="entry name" value="TELOMERE-ASSOCIATED PROTEIN RIF1"/>
    <property type="match status" value="1"/>
</dbReference>
<dbReference type="Pfam" id="PF00746">
    <property type="entry name" value="Gram_pos_anchor"/>
    <property type="match status" value="1"/>
</dbReference>
<dbReference type="Pfam" id="PF19258">
    <property type="entry name" value="KxYKxGKxW_sig"/>
    <property type="match status" value="1"/>
</dbReference>
<dbReference type="Pfam" id="PF18483">
    <property type="entry name" value="Lectin_L-type_dom"/>
    <property type="match status" value="1"/>
</dbReference>
<dbReference type="SUPFAM" id="SSF49313">
    <property type="entry name" value="Cadherin-like"/>
    <property type="match status" value="2"/>
</dbReference>
<dbReference type="SUPFAM" id="SSF49899">
    <property type="entry name" value="Concanavalin A-like lectins/glucanases"/>
    <property type="match status" value="1"/>
</dbReference>
<dbReference type="PROSITE" id="PS50847">
    <property type="entry name" value="GRAM_POS_ANCHORING"/>
    <property type="match status" value="1"/>
</dbReference>
<name>SRAP_STAA8</name>
<protein>
    <recommendedName>
        <fullName>Serine-rich adhesin for platelets</fullName>
    </recommendedName>
    <alternativeName>
        <fullName evidence="14">Adhesin SraP</fullName>
    </alternativeName>
    <alternativeName>
        <fullName evidence="11">Staphylococcus aureus surface protein A</fullName>
        <shortName evidence="11">SasA</shortName>
    </alternativeName>
</protein>
<keyword id="KW-0002">3D-structure</keyword>
<keyword id="KW-0106">Calcium</keyword>
<keyword id="KW-0130">Cell adhesion</keyword>
<keyword id="KW-0134">Cell wall</keyword>
<keyword id="KW-0325">Glycoprotein</keyword>
<keyword id="KW-0479">Metal-binding</keyword>
<keyword id="KW-0572">Peptidoglycan-anchor</keyword>
<keyword id="KW-1185">Reference proteome</keyword>
<keyword id="KW-0964">Secreted</keyword>
<keyword id="KW-0732">Signal</keyword>
<keyword id="KW-0843">Virulence</keyword>
<reference key="1">
    <citation type="book" date="2006" name="Gram positive pathogens, 2nd edition">
        <title>The Staphylococcus aureus NCTC 8325 genome.</title>
        <editorList>
            <person name="Fischetti V."/>
            <person name="Novick R."/>
            <person name="Ferretti J."/>
            <person name="Portnoy D."/>
            <person name="Rood J."/>
        </editorList>
        <authorList>
            <person name="Gillaspy A.F."/>
            <person name="Worrell V."/>
            <person name="Orvis J."/>
            <person name="Roe B.A."/>
            <person name="Dyer D.W."/>
            <person name="Iandolo J.J."/>
        </authorList>
    </citation>
    <scope>NUCLEOTIDE SEQUENCE [LARGE SCALE GENOMIC DNA]</scope>
    <source>
        <strain>NCTC 8325 / PS 47</strain>
    </source>
</reference>
<reference key="2">
    <citation type="journal article" date="2003" name="Microbiology">
        <title>Characterization of novel LPXTG-containing proteins of Staphylococcus aureus identified from genome sequences.</title>
        <authorList>
            <person name="Roche F.M."/>
            <person name="Massey R."/>
            <person name="Peacock S.J."/>
            <person name="Day N.P.J."/>
            <person name="Visai L."/>
            <person name="Speziale P."/>
            <person name="Lam A."/>
            <person name="Pallen M."/>
            <person name="Foster T.J."/>
        </authorList>
    </citation>
    <scope>SUBCELLULAR LOCATION</scope>
    <scope>PROTEOLYTIC CLEAVAGE</scope>
</reference>
<reference key="3">
    <citation type="journal article" date="2005" name="Infect. Immun.">
        <title>Role of SraP, a serine-rich surface protein of Staphylococcus aureus, in binding to human platelets.</title>
        <authorList>
            <person name="Siboo I.R."/>
            <person name="Chambers H.F."/>
            <person name="Sullam P.M."/>
        </authorList>
    </citation>
    <scope>FUNCTION</scope>
    <scope>SUBCELLULAR LOCATION</scope>
    <scope>DOMAIN</scope>
    <scope>GLYCOSYLATION</scope>
    <source>
        <strain>ISP479C</strain>
    </source>
</reference>
<reference key="4">
    <citation type="journal article" date="2002" name="Proc. Natl. Acad. Sci. U.S.A.">
        <title>An iron-regulated sortase anchors a class of surface protein during Staphylococcus aureus pathogenesis.</title>
        <authorList>
            <person name="Mazmanian S.K."/>
            <person name="Ton-That H."/>
            <person name="Su K."/>
            <person name="Schneewind O."/>
        </authorList>
    </citation>
    <scope>SUBCELLULAR LOCATION</scope>
    <scope>PROCESSING BY SORTASE A</scope>
    <source>
        <strain>RN4220</strain>
    </source>
</reference>
<reference key="5">
    <citation type="journal article" date="2008" name="EMBO J.">
        <title>Signal peptides direct surface proteins to two distinct envelope locations of Staphylococcus aureus.</title>
        <authorList>
            <person name="DeDent A."/>
            <person name="Bae T."/>
            <person name="Missiakas D.M."/>
            <person name="Schneewind O."/>
        </authorList>
    </citation>
    <scope>SUBCELLULAR LOCATION</scope>
    <source>
        <strain>RN4220</strain>
    </source>
</reference>
<reference key="6">
    <citation type="journal article" date="2008" name="J. Bacteriol.">
        <title>Characterization of the accessory Sec system of Staphylococcus aureus.</title>
        <authorList>
            <person name="Siboo I.R."/>
            <person name="Chaffin D.O."/>
            <person name="Rubens C.E."/>
            <person name="Sullam P.M."/>
        </authorList>
    </citation>
    <scope>SUBCELLULAR LOCATION</scope>
    <scope>EXPORT VIA THE ACCESSORY SECA2/SECY2 SYSTEM</scope>
    <source>
        <strain>ISP479C</strain>
    </source>
</reference>
<reference key="7">
    <citation type="journal article" date="2009" name="Microbiology">
        <title>Glycosylation and biogenesis of a family of serine-rich bacterial adhesins.</title>
        <authorList>
            <person name="Zhou M."/>
            <person name="Wu H."/>
        </authorList>
    </citation>
    <scope>DISCUSSION OF SEQUENCE</scope>
</reference>
<reference key="8">
    <citation type="journal article" date="2010" name="J. Bacteriol.">
        <title>Synthetic effects of secG and secY2 mutations on exoproteome biogenesis in Staphylococcus aureus.</title>
        <authorList>
            <person name="Sibbald M.J."/>
            <person name="Winter T."/>
            <person name="van der Kooi-Pol M.M."/>
            <person name="Buist G."/>
            <person name="Tsompanidou E."/>
            <person name="Bosma T."/>
            <person name="Schafer T."/>
            <person name="Ohlsen K."/>
            <person name="Hecker M."/>
            <person name="Antelmann H."/>
            <person name="Engelmann S."/>
            <person name="van Dijl J.M."/>
        </authorList>
    </citation>
    <scope>INDUCTION</scope>
    <source>
        <strain>RN4220</strain>
    </source>
</reference>
<reference key="9">
    <citation type="journal article" date="2010" name="PLoS Pathog.">
        <title>The pneumococcal serine-rich repeat protein is an intra-species bacterial adhesin that promotes bacterial aggregation in vivo and in biofilms.</title>
        <authorList>
            <person name="Sanchez C.J."/>
            <person name="Shivshankar P."/>
            <person name="Stol K."/>
            <person name="Trakhtenbroit S."/>
            <person name="Sullam P.M."/>
            <person name="Sauer K."/>
            <person name="Hermans P.W."/>
            <person name="Orihuela C.J."/>
        </authorList>
    </citation>
    <scope>FUNCTION</scope>
    <scope>DOMAIN</scope>
    <scope>DISRUPTION PHENOTYPE</scope>
    <source>
        <strain>ISP479C</strain>
    </source>
</reference>
<reference evidence="18 19 20 21" key="10">
    <citation type="journal article" date="2014" name="PLoS Pathog.">
        <title>Structural insights into SraP-mediated Staphylococcus aureus adhesion to host cells.</title>
        <authorList>
            <person name="Yang Y.H."/>
            <person name="Jiang Y.L."/>
            <person name="Zhang J."/>
            <person name="Wang L."/>
            <person name="Bai X.H."/>
            <person name="Zhang S.J."/>
            <person name="Ren Y.M."/>
            <person name="Li N."/>
            <person name="Zhang Y.H."/>
            <person name="Zhang Z."/>
            <person name="Gong Q."/>
            <person name="Mei Y."/>
            <person name="Xue T."/>
            <person name="Zhang J.R."/>
            <person name="Chen Y."/>
            <person name="Zhou C.Z."/>
        </authorList>
    </citation>
    <scope>X-RAY CRYSTALLOGRAPHY (1.59 ANGSTROMS) OF 494-663 IN COMPLEX WITH CALCIUM</scope>
    <scope>X-RAY CRYSTALLOGRAPHY (2.05 ANGSTROMS) OF 245-751 (NON-REPEAT REGION) IN COMPLEX WITH CALCIUM</scope>
    <scope>FUNCTION</scope>
    <scope>IDENTIFICATION OF HOST RECEPTOR</scope>
    <scope>DOMAIN</scope>
    <scope>DISRUPTION PHENOTYPE</scope>
    <scope>MUTAGENESIS OF TYR-367</scope>
    <source>
        <strain>NCTC 8325 / PS 47</strain>
    </source>
</reference>